<feature type="chain" id="PRO_1000205096" description="Enolase">
    <location>
        <begin position="1"/>
        <end position="429"/>
    </location>
</feature>
<feature type="active site" description="Proton donor" evidence="1">
    <location>
        <position position="205"/>
    </location>
</feature>
<feature type="active site" description="Proton acceptor" evidence="1">
    <location>
        <position position="338"/>
    </location>
</feature>
<feature type="binding site" evidence="1">
    <location>
        <position position="163"/>
    </location>
    <ligand>
        <name>(2R)-2-phosphoglycerate</name>
        <dbReference type="ChEBI" id="CHEBI:58289"/>
    </ligand>
</feature>
<feature type="binding site" evidence="1">
    <location>
        <position position="242"/>
    </location>
    <ligand>
        <name>Mg(2+)</name>
        <dbReference type="ChEBI" id="CHEBI:18420"/>
    </ligand>
</feature>
<feature type="binding site" evidence="1">
    <location>
        <position position="286"/>
    </location>
    <ligand>
        <name>Mg(2+)</name>
        <dbReference type="ChEBI" id="CHEBI:18420"/>
    </ligand>
</feature>
<feature type="binding site" evidence="1">
    <location>
        <position position="313"/>
    </location>
    <ligand>
        <name>Mg(2+)</name>
        <dbReference type="ChEBI" id="CHEBI:18420"/>
    </ligand>
</feature>
<feature type="binding site" evidence="1">
    <location>
        <position position="338"/>
    </location>
    <ligand>
        <name>(2R)-2-phosphoglycerate</name>
        <dbReference type="ChEBI" id="CHEBI:58289"/>
    </ligand>
</feature>
<feature type="binding site" evidence="1">
    <location>
        <position position="367"/>
    </location>
    <ligand>
        <name>(2R)-2-phosphoglycerate</name>
        <dbReference type="ChEBI" id="CHEBI:58289"/>
    </ligand>
</feature>
<feature type="binding site" evidence="1">
    <location>
        <position position="368"/>
    </location>
    <ligand>
        <name>(2R)-2-phosphoglycerate</name>
        <dbReference type="ChEBI" id="CHEBI:58289"/>
    </ligand>
</feature>
<feature type="binding site" evidence="1">
    <location>
        <position position="389"/>
    </location>
    <ligand>
        <name>(2R)-2-phosphoglycerate</name>
        <dbReference type="ChEBI" id="CHEBI:58289"/>
    </ligand>
</feature>
<reference key="1">
    <citation type="submission" date="2009-07" db="EMBL/GenBank/DDBJ databases">
        <title>Complete sequence of Geobacter sp. M21.</title>
        <authorList>
            <consortium name="US DOE Joint Genome Institute"/>
            <person name="Lucas S."/>
            <person name="Copeland A."/>
            <person name="Lapidus A."/>
            <person name="Glavina del Rio T."/>
            <person name="Dalin E."/>
            <person name="Tice H."/>
            <person name="Bruce D."/>
            <person name="Goodwin L."/>
            <person name="Pitluck S."/>
            <person name="Saunders E."/>
            <person name="Brettin T."/>
            <person name="Detter J.C."/>
            <person name="Han C."/>
            <person name="Larimer F."/>
            <person name="Land M."/>
            <person name="Hauser L."/>
            <person name="Kyrpides N."/>
            <person name="Ovchinnikova G."/>
            <person name="Lovley D."/>
        </authorList>
    </citation>
    <scope>NUCLEOTIDE SEQUENCE [LARGE SCALE GENOMIC DNA]</scope>
    <source>
        <strain>M21</strain>
    </source>
</reference>
<gene>
    <name evidence="1" type="primary">eno</name>
    <name type="ordered locus">GM21_3264</name>
</gene>
<protein>
    <recommendedName>
        <fullName evidence="1">Enolase</fullName>
        <ecNumber evidence="1">4.2.1.11</ecNumber>
    </recommendedName>
    <alternativeName>
        <fullName evidence="1">2-phospho-D-glycerate hydro-lyase</fullName>
    </alternativeName>
    <alternativeName>
        <fullName evidence="1">2-phosphoglycerate dehydratase</fullName>
    </alternativeName>
</protein>
<dbReference type="EC" id="4.2.1.11" evidence="1"/>
<dbReference type="EMBL" id="CP001661">
    <property type="protein sequence ID" value="ACT19290.1"/>
    <property type="molecule type" value="Genomic_DNA"/>
</dbReference>
<dbReference type="SMR" id="C6E471"/>
<dbReference type="STRING" id="443144.GM21_3264"/>
<dbReference type="KEGG" id="gem:GM21_3264"/>
<dbReference type="eggNOG" id="COG0148">
    <property type="taxonomic scope" value="Bacteria"/>
</dbReference>
<dbReference type="HOGENOM" id="CLU_031223_2_1_7"/>
<dbReference type="OrthoDB" id="9804716at2"/>
<dbReference type="UniPathway" id="UPA00109">
    <property type="reaction ID" value="UER00187"/>
</dbReference>
<dbReference type="GO" id="GO:0009986">
    <property type="term" value="C:cell surface"/>
    <property type="evidence" value="ECO:0007669"/>
    <property type="project" value="UniProtKB-SubCell"/>
</dbReference>
<dbReference type="GO" id="GO:0005576">
    <property type="term" value="C:extracellular region"/>
    <property type="evidence" value="ECO:0007669"/>
    <property type="project" value="UniProtKB-SubCell"/>
</dbReference>
<dbReference type="GO" id="GO:0000015">
    <property type="term" value="C:phosphopyruvate hydratase complex"/>
    <property type="evidence" value="ECO:0007669"/>
    <property type="project" value="InterPro"/>
</dbReference>
<dbReference type="GO" id="GO:0000287">
    <property type="term" value="F:magnesium ion binding"/>
    <property type="evidence" value="ECO:0007669"/>
    <property type="project" value="UniProtKB-UniRule"/>
</dbReference>
<dbReference type="GO" id="GO:0004634">
    <property type="term" value="F:phosphopyruvate hydratase activity"/>
    <property type="evidence" value="ECO:0007669"/>
    <property type="project" value="UniProtKB-UniRule"/>
</dbReference>
<dbReference type="GO" id="GO:0006096">
    <property type="term" value="P:glycolytic process"/>
    <property type="evidence" value="ECO:0007669"/>
    <property type="project" value="UniProtKB-UniRule"/>
</dbReference>
<dbReference type="CDD" id="cd03313">
    <property type="entry name" value="enolase"/>
    <property type="match status" value="1"/>
</dbReference>
<dbReference type="FunFam" id="3.20.20.120:FF:000001">
    <property type="entry name" value="Enolase"/>
    <property type="match status" value="1"/>
</dbReference>
<dbReference type="FunFam" id="3.30.390.10:FF:000001">
    <property type="entry name" value="Enolase"/>
    <property type="match status" value="1"/>
</dbReference>
<dbReference type="Gene3D" id="3.20.20.120">
    <property type="entry name" value="Enolase-like C-terminal domain"/>
    <property type="match status" value="1"/>
</dbReference>
<dbReference type="Gene3D" id="3.30.390.10">
    <property type="entry name" value="Enolase-like, N-terminal domain"/>
    <property type="match status" value="1"/>
</dbReference>
<dbReference type="HAMAP" id="MF_00318">
    <property type="entry name" value="Enolase"/>
    <property type="match status" value="1"/>
</dbReference>
<dbReference type="InterPro" id="IPR000941">
    <property type="entry name" value="Enolase"/>
</dbReference>
<dbReference type="InterPro" id="IPR036849">
    <property type="entry name" value="Enolase-like_C_sf"/>
</dbReference>
<dbReference type="InterPro" id="IPR029017">
    <property type="entry name" value="Enolase-like_N"/>
</dbReference>
<dbReference type="InterPro" id="IPR020810">
    <property type="entry name" value="Enolase_C"/>
</dbReference>
<dbReference type="InterPro" id="IPR020809">
    <property type="entry name" value="Enolase_CS"/>
</dbReference>
<dbReference type="InterPro" id="IPR020811">
    <property type="entry name" value="Enolase_N"/>
</dbReference>
<dbReference type="NCBIfam" id="TIGR01060">
    <property type="entry name" value="eno"/>
    <property type="match status" value="1"/>
</dbReference>
<dbReference type="PANTHER" id="PTHR11902">
    <property type="entry name" value="ENOLASE"/>
    <property type="match status" value="1"/>
</dbReference>
<dbReference type="PANTHER" id="PTHR11902:SF1">
    <property type="entry name" value="ENOLASE"/>
    <property type="match status" value="1"/>
</dbReference>
<dbReference type="Pfam" id="PF00113">
    <property type="entry name" value="Enolase_C"/>
    <property type="match status" value="1"/>
</dbReference>
<dbReference type="Pfam" id="PF03952">
    <property type="entry name" value="Enolase_N"/>
    <property type="match status" value="1"/>
</dbReference>
<dbReference type="PIRSF" id="PIRSF001400">
    <property type="entry name" value="Enolase"/>
    <property type="match status" value="1"/>
</dbReference>
<dbReference type="PRINTS" id="PR00148">
    <property type="entry name" value="ENOLASE"/>
</dbReference>
<dbReference type="SFLD" id="SFLDF00002">
    <property type="entry name" value="enolase"/>
    <property type="match status" value="1"/>
</dbReference>
<dbReference type="SFLD" id="SFLDG00178">
    <property type="entry name" value="enolase"/>
    <property type="match status" value="1"/>
</dbReference>
<dbReference type="SMART" id="SM01192">
    <property type="entry name" value="Enolase_C"/>
    <property type="match status" value="1"/>
</dbReference>
<dbReference type="SMART" id="SM01193">
    <property type="entry name" value="Enolase_N"/>
    <property type="match status" value="1"/>
</dbReference>
<dbReference type="SUPFAM" id="SSF51604">
    <property type="entry name" value="Enolase C-terminal domain-like"/>
    <property type="match status" value="1"/>
</dbReference>
<dbReference type="SUPFAM" id="SSF54826">
    <property type="entry name" value="Enolase N-terminal domain-like"/>
    <property type="match status" value="1"/>
</dbReference>
<dbReference type="PROSITE" id="PS00164">
    <property type="entry name" value="ENOLASE"/>
    <property type="match status" value="1"/>
</dbReference>
<proteinExistence type="inferred from homology"/>
<keyword id="KW-0963">Cytoplasm</keyword>
<keyword id="KW-0324">Glycolysis</keyword>
<keyword id="KW-0456">Lyase</keyword>
<keyword id="KW-0460">Magnesium</keyword>
<keyword id="KW-0479">Metal-binding</keyword>
<keyword id="KW-0964">Secreted</keyword>
<sequence length="429" mass="46492">MSQITDVYAREILDSRGNPTLEVEVFLDSGVMGRAAVPSGASTGEREALELRDGDKGRYLGKGVEQAVSNVNDIIADEITGMDATDQVGIDKKMLELDGTEFKSRLGANAILGVSLAVAKAAAEEVGVPLYQYIGGCNAKELPLPMMNIINGGAHADNNVDIQEFMIMPAGAANFKEALRMGAEIFHALKSVLKGKGYNTAVGDEGGFAPNLKSNEEALEVIMEAIVKAGYKPGEEVLLALDVASSELFENGVYTLENEAESKKTADQLVDFYENLVNKYPIVSIEDGMAENDWDGWKKLTDRLGKRIQIVGDDLFVTNPSILKEGIKKGIANSILIKLNQIGTLTETLDAIEMAKRAGYTCVISHRSGETEDTTLADLAVAVNAGQIKTGSLCRTDRVCKYNQLLRIEDELDDVAQFRGHEVFYNIKK</sequence>
<evidence type="ECO:0000255" key="1">
    <source>
        <dbReference type="HAMAP-Rule" id="MF_00318"/>
    </source>
</evidence>
<accession>C6E471</accession>
<organism>
    <name type="scientific">Geobacter sp. (strain M21)</name>
    <dbReference type="NCBI Taxonomy" id="443144"/>
    <lineage>
        <taxon>Bacteria</taxon>
        <taxon>Pseudomonadati</taxon>
        <taxon>Thermodesulfobacteriota</taxon>
        <taxon>Desulfuromonadia</taxon>
        <taxon>Geobacterales</taxon>
        <taxon>Geobacteraceae</taxon>
        <taxon>Geobacter</taxon>
    </lineage>
</organism>
<comment type="function">
    <text evidence="1">Catalyzes the reversible conversion of 2-phosphoglycerate (2-PG) into phosphoenolpyruvate (PEP). It is essential for the degradation of carbohydrates via glycolysis.</text>
</comment>
<comment type="catalytic activity">
    <reaction evidence="1">
        <text>(2R)-2-phosphoglycerate = phosphoenolpyruvate + H2O</text>
        <dbReference type="Rhea" id="RHEA:10164"/>
        <dbReference type="ChEBI" id="CHEBI:15377"/>
        <dbReference type="ChEBI" id="CHEBI:58289"/>
        <dbReference type="ChEBI" id="CHEBI:58702"/>
        <dbReference type="EC" id="4.2.1.11"/>
    </reaction>
</comment>
<comment type="cofactor">
    <cofactor evidence="1">
        <name>Mg(2+)</name>
        <dbReference type="ChEBI" id="CHEBI:18420"/>
    </cofactor>
    <text evidence="1">Binds a second Mg(2+) ion via substrate during catalysis.</text>
</comment>
<comment type="pathway">
    <text evidence="1">Carbohydrate degradation; glycolysis; pyruvate from D-glyceraldehyde 3-phosphate: step 4/5.</text>
</comment>
<comment type="subcellular location">
    <subcellularLocation>
        <location evidence="1">Cytoplasm</location>
    </subcellularLocation>
    <subcellularLocation>
        <location evidence="1">Secreted</location>
    </subcellularLocation>
    <subcellularLocation>
        <location evidence="1">Cell surface</location>
    </subcellularLocation>
    <text evidence="1">Fractions of enolase are present in both the cytoplasm and on the cell surface.</text>
</comment>
<comment type="similarity">
    <text evidence="1">Belongs to the enolase family.</text>
</comment>
<name>ENO_GEOSM</name>